<evidence type="ECO:0000255" key="1">
    <source>
        <dbReference type="HAMAP-Rule" id="MF_00022"/>
    </source>
</evidence>
<feature type="chain" id="PRO_0000330949" description="Glutamate--tRNA ligase">
    <location>
        <begin position="1"/>
        <end position="480"/>
    </location>
</feature>
<feature type="short sequence motif" description="'HIGH' region" evidence="1">
    <location>
        <begin position="21"/>
        <end position="31"/>
    </location>
</feature>
<feature type="short sequence motif" description="'KMSKS' region" evidence="1">
    <location>
        <begin position="248"/>
        <end position="252"/>
    </location>
</feature>
<feature type="binding site" evidence="1">
    <location>
        <position position="110"/>
    </location>
    <ligand>
        <name>Zn(2+)</name>
        <dbReference type="ChEBI" id="CHEBI:29105"/>
    </ligand>
</feature>
<feature type="binding site" evidence="1">
    <location>
        <position position="112"/>
    </location>
    <ligand>
        <name>Zn(2+)</name>
        <dbReference type="ChEBI" id="CHEBI:29105"/>
    </ligand>
</feature>
<feature type="binding site" evidence="1">
    <location>
        <position position="137"/>
    </location>
    <ligand>
        <name>Zn(2+)</name>
        <dbReference type="ChEBI" id="CHEBI:29105"/>
    </ligand>
</feature>
<feature type="binding site" evidence="1">
    <location>
        <position position="139"/>
    </location>
    <ligand>
        <name>Zn(2+)</name>
        <dbReference type="ChEBI" id="CHEBI:29105"/>
    </ligand>
</feature>
<feature type="binding site" evidence="1">
    <location>
        <position position="251"/>
    </location>
    <ligand>
        <name>ATP</name>
        <dbReference type="ChEBI" id="CHEBI:30616"/>
    </ligand>
</feature>
<comment type="function">
    <text evidence="1">Catalyzes the attachment of glutamate to tRNA(Glu) in a two-step reaction: glutamate is first activated by ATP to form Glu-AMP and then transferred to the acceptor end of tRNA(Glu).</text>
</comment>
<comment type="catalytic activity">
    <reaction evidence="1">
        <text>tRNA(Glu) + L-glutamate + ATP = L-glutamyl-tRNA(Glu) + AMP + diphosphate</text>
        <dbReference type="Rhea" id="RHEA:23540"/>
        <dbReference type="Rhea" id="RHEA-COMP:9663"/>
        <dbReference type="Rhea" id="RHEA-COMP:9680"/>
        <dbReference type="ChEBI" id="CHEBI:29985"/>
        <dbReference type="ChEBI" id="CHEBI:30616"/>
        <dbReference type="ChEBI" id="CHEBI:33019"/>
        <dbReference type="ChEBI" id="CHEBI:78442"/>
        <dbReference type="ChEBI" id="CHEBI:78520"/>
        <dbReference type="ChEBI" id="CHEBI:456215"/>
        <dbReference type="EC" id="6.1.1.17"/>
    </reaction>
</comment>
<comment type="cofactor">
    <cofactor evidence="1">
        <name>Zn(2+)</name>
        <dbReference type="ChEBI" id="CHEBI:29105"/>
    </cofactor>
    <text evidence="1">Binds 1 zinc ion per subunit.</text>
</comment>
<comment type="subunit">
    <text evidence="1">Monomer.</text>
</comment>
<comment type="subcellular location">
    <subcellularLocation>
        <location evidence="1">Cytoplasm</location>
    </subcellularLocation>
</comment>
<comment type="similarity">
    <text evidence="1">Belongs to the class-I aminoacyl-tRNA synthetase family. Glutamate--tRNA ligase type 1 subfamily.</text>
</comment>
<proteinExistence type="inferred from homology"/>
<name>SYE_ACTSZ</name>
<protein>
    <recommendedName>
        <fullName evidence="1">Glutamate--tRNA ligase</fullName>
        <ecNumber evidence="1">6.1.1.17</ecNumber>
    </recommendedName>
    <alternativeName>
        <fullName evidence="1">Glutamyl-tRNA synthetase</fullName>
        <shortName evidence="1">GluRS</shortName>
    </alternativeName>
</protein>
<keyword id="KW-0030">Aminoacyl-tRNA synthetase</keyword>
<keyword id="KW-0067">ATP-binding</keyword>
<keyword id="KW-0963">Cytoplasm</keyword>
<keyword id="KW-0436">Ligase</keyword>
<keyword id="KW-0479">Metal-binding</keyword>
<keyword id="KW-0547">Nucleotide-binding</keyword>
<keyword id="KW-0648">Protein biosynthesis</keyword>
<keyword id="KW-1185">Reference proteome</keyword>
<keyword id="KW-0862">Zinc</keyword>
<dbReference type="EC" id="6.1.1.17" evidence="1"/>
<dbReference type="EMBL" id="CP000746">
    <property type="protein sequence ID" value="ABR73930.1"/>
    <property type="molecule type" value="Genomic_DNA"/>
</dbReference>
<dbReference type="RefSeq" id="WP_012072310.1">
    <property type="nucleotide sequence ID" value="NC_009655.1"/>
</dbReference>
<dbReference type="SMR" id="A6VLT3"/>
<dbReference type="STRING" id="339671.Asuc_0555"/>
<dbReference type="KEGG" id="asu:Asuc_0555"/>
<dbReference type="eggNOG" id="COG0008">
    <property type="taxonomic scope" value="Bacteria"/>
</dbReference>
<dbReference type="HOGENOM" id="CLU_015768_6_0_6"/>
<dbReference type="OrthoDB" id="9807503at2"/>
<dbReference type="Proteomes" id="UP000001114">
    <property type="component" value="Chromosome"/>
</dbReference>
<dbReference type="GO" id="GO:0005829">
    <property type="term" value="C:cytosol"/>
    <property type="evidence" value="ECO:0007669"/>
    <property type="project" value="TreeGrafter"/>
</dbReference>
<dbReference type="GO" id="GO:0005524">
    <property type="term" value="F:ATP binding"/>
    <property type="evidence" value="ECO:0007669"/>
    <property type="project" value="UniProtKB-UniRule"/>
</dbReference>
<dbReference type="GO" id="GO:0004818">
    <property type="term" value="F:glutamate-tRNA ligase activity"/>
    <property type="evidence" value="ECO:0007669"/>
    <property type="project" value="UniProtKB-UniRule"/>
</dbReference>
<dbReference type="GO" id="GO:0000049">
    <property type="term" value="F:tRNA binding"/>
    <property type="evidence" value="ECO:0007669"/>
    <property type="project" value="InterPro"/>
</dbReference>
<dbReference type="GO" id="GO:0008270">
    <property type="term" value="F:zinc ion binding"/>
    <property type="evidence" value="ECO:0007669"/>
    <property type="project" value="InterPro"/>
</dbReference>
<dbReference type="GO" id="GO:0006424">
    <property type="term" value="P:glutamyl-tRNA aminoacylation"/>
    <property type="evidence" value="ECO:0007669"/>
    <property type="project" value="UniProtKB-UniRule"/>
</dbReference>
<dbReference type="CDD" id="cd00808">
    <property type="entry name" value="GluRS_core"/>
    <property type="match status" value="1"/>
</dbReference>
<dbReference type="FunFam" id="3.40.50.620:FF:000007">
    <property type="entry name" value="Glutamate--tRNA ligase"/>
    <property type="match status" value="1"/>
</dbReference>
<dbReference type="Gene3D" id="1.10.10.350">
    <property type="match status" value="1"/>
</dbReference>
<dbReference type="Gene3D" id="3.40.50.620">
    <property type="entry name" value="HUPs"/>
    <property type="match status" value="1"/>
</dbReference>
<dbReference type="HAMAP" id="MF_00022">
    <property type="entry name" value="Glu_tRNA_synth_type1"/>
    <property type="match status" value="1"/>
</dbReference>
<dbReference type="InterPro" id="IPR045462">
    <property type="entry name" value="aa-tRNA-synth_I_cd-bd"/>
</dbReference>
<dbReference type="InterPro" id="IPR020751">
    <property type="entry name" value="aa-tRNA-synth_I_codon-bd_sub2"/>
</dbReference>
<dbReference type="InterPro" id="IPR001412">
    <property type="entry name" value="aa-tRNA-synth_I_CS"/>
</dbReference>
<dbReference type="InterPro" id="IPR008925">
    <property type="entry name" value="aa_tRNA-synth_I_cd-bd_sf"/>
</dbReference>
<dbReference type="InterPro" id="IPR004527">
    <property type="entry name" value="Glu-tRNA-ligase_bac/mito"/>
</dbReference>
<dbReference type="InterPro" id="IPR000924">
    <property type="entry name" value="Glu/Gln-tRNA-synth"/>
</dbReference>
<dbReference type="InterPro" id="IPR020058">
    <property type="entry name" value="Glu/Gln-tRNA-synth_Ib_cat-dom"/>
</dbReference>
<dbReference type="InterPro" id="IPR049940">
    <property type="entry name" value="GluQ/Sye"/>
</dbReference>
<dbReference type="InterPro" id="IPR033910">
    <property type="entry name" value="GluRS_core"/>
</dbReference>
<dbReference type="InterPro" id="IPR014729">
    <property type="entry name" value="Rossmann-like_a/b/a_fold"/>
</dbReference>
<dbReference type="NCBIfam" id="TIGR00464">
    <property type="entry name" value="gltX_bact"/>
    <property type="match status" value="1"/>
</dbReference>
<dbReference type="PANTHER" id="PTHR43311">
    <property type="entry name" value="GLUTAMATE--TRNA LIGASE"/>
    <property type="match status" value="1"/>
</dbReference>
<dbReference type="PANTHER" id="PTHR43311:SF2">
    <property type="entry name" value="GLUTAMATE--TRNA LIGASE, MITOCHONDRIAL-RELATED"/>
    <property type="match status" value="1"/>
</dbReference>
<dbReference type="Pfam" id="PF19269">
    <property type="entry name" value="Anticodon_2"/>
    <property type="match status" value="1"/>
</dbReference>
<dbReference type="Pfam" id="PF00749">
    <property type="entry name" value="tRNA-synt_1c"/>
    <property type="match status" value="1"/>
</dbReference>
<dbReference type="PRINTS" id="PR00987">
    <property type="entry name" value="TRNASYNTHGLU"/>
</dbReference>
<dbReference type="SUPFAM" id="SSF48163">
    <property type="entry name" value="An anticodon-binding domain of class I aminoacyl-tRNA synthetases"/>
    <property type="match status" value="1"/>
</dbReference>
<dbReference type="SUPFAM" id="SSF52374">
    <property type="entry name" value="Nucleotidylyl transferase"/>
    <property type="match status" value="1"/>
</dbReference>
<dbReference type="PROSITE" id="PS00178">
    <property type="entry name" value="AA_TRNA_LIGASE_I"/>
    <property type="match status" value="1"/>
</dbReference>
<accession>A6VLT3</accession>
<organism>
    <name type="scientific">Actinobacillus succinogenes (strain ATCC 55618 / DSM 22257 / CCUG 43843 / 130Z)</name>
    <dbReference type="NCBI Taxonomy" id="339671"/>
    <lineage>
        <taxon>Bacteria</taxon>
        <taxon>Pseudomonadati</taxon>
        <taxon>Pseudomonadota</taxon>
        <taxon>Gammaproteobacteria</taxon>
        <taxon>Pasteurellales</taxon>
        <taxon>Pasteurellaceae</taxon>
        <taxon>Actinobacillus</taxon>
    </lineage>
</organism>
<sequence length="480" mass="54466">MKLEPLFDLDPNVTVRTRFAPSPTGYLHVGGARTALYSWLFAKHHHGEFVLRIEDTDLERSTPEATAAIIEGMEWLNLAWEHGPYFQTKRFTRYNQVIDQMIEQGLAYRCYCTKERLEELRHSQEANKEKPRYDRHCLHDHSHSPDEPHVVRFKNPQEGSVIFDDAVRGRIEISNSELDDLIIRRTDGSPTYNFCVVVDDWDMGITHVVRGEDHINNTPRQINILNALGAPIPTYAHVSMINGDDGQKLSKRHGAVSVMQYRDDGYLPEALVNYLVRLGWGHGDQEIFSREEMINLFELEHVSKSASAFNTEKLQWLNQHYMRELPADYVANHLAWQYRDLGIDTANGPALTDIVSMLAERSKTLREMALSSRYFFEEFETFDETAAKKHLKAAAVQPLEKVKEKLTALSVWDAHSTHEAIEQTAADLDVGMGKVGMPLRVAVTGAGQSPSMDVTLAAIGRERVLARIDKAIAFIKAKAA</sequence>
<reference key="1">
    <citation type="journal article" date="2010" name="BMC Genomics">
        <title>A genomic perspective on the potential of Actinobacillus succinogenes for industrial succinate production.</title>
        <authorList>
            <person name="McKinlay J.B."/>
            <person name="Laivenieks M."/>
            <person name="Schindler B.D."/>
            <person name="McKinlay A.A."/>
            <person name="Siddaramappa S."/>
            <person name="Challacombe J.F."/>
            <person name="Lowry S.R."/>
            <person name="Clum A."/>
            <person name="Lapidus A.L."/>
            <person name="Burkhart K.B."/>
            <person name="Harkins V."/>
            <person name="Vieille C."/>
        </authorList>
    </citation>
    <scope>NUCLEOTIDE SEQUENCE [LARGE SCALE GENOMIC DNA]</scope>
    <source>
        <strain>ATCC 55618 / DSM 22257 / CCUG 43843 / 130Z</strain>
    </source>
</reference>
<gene>
    <name evidence="1" type="primary">gltX</name>
    <name type="ordered locus">Asuc_0555</name>
</gene>